<dbReference type="EC" id="6.3.4.5" evidence="1"/>
<dbReference type="EMBL" id="AL596171">
    <property type="protein sequence ID" value="CAC97424.1"/>
    <property type="molecule type" value="Genomic_DNA"/>
</dbReference>
<dbReference type="PIR" id="AH1706">
    <property type="entry name" value="AH1706"/>
</dbReference>
<dbReference type="RefSeq" id="WP_003769660.1">
    <property type="nucleotide sequence ID" value="NC_003212.1"/>
</dbReference>
<dbReference type="SMR" id="Q929S9"/>
<dbReference type="STRING" id="272626.gene:17566553"/>
<dbReference type="GeneID" id="93235534"/>
<dbReference type="KEGG" id="lin:argG"/>
<dbReference type="eggNOG" id="COG0137">
    <property type="taxonomic scope" value="Bacteria"/>
</dbReference>
<dbReference type="HOGENOM" id="CLU_032784_4_2_9"/>
<dbReference type="OrthoDB" id="9801641at2"/>
<dbReference type="UniPathway" id="UPA00068">
    <property type="reaction ID" value="UER00113"/>
</dbReference>
<dbReference type="Proteomes" id="UP000002513">
    <property type="component" value="Chromosome"/>
</dbReference>
<dbReference type="GO" id="GO:0005737">
    <property type="term" value="C:cytoplasm"/>
    <property type="evidence" value="ECO:0007669"/>
    <property type="project" value="UniProtKB-SubCell"/>
</dbReference>
<dbReference type="GO" id="GO:0004055">
    <property type="term" value="F:argininosuccinate synthase activity"/>
    <property type="evidence" value="ECO:0007669"/>
    <property type="project" value="UniProtKB-UniRule"/>
</dbReference>
<dbReference type="GO" id="GO:0005524">
    <property type="term" value="F:ATP binding"/>
    <property type="evidence" value="ECO:0007669"/>
    <property type="project" value="UniProtKB-UniRule"/>
</dbReference>
<dbReference type="GO" id="GO:0000053">
    <property type="term" value="P:argininosuccinate metabolic process"/>
    <property type="evidence" value="ECO:0007669"/>
    <property type="project" value="TreeGrafter"/>
</dbReference>
<dbReference type="GO" id="GO:0006526">
    <property type="term" value="P:L-arginine biosynthetic process"/>
    <property type="evidence" value="ECO:0007669"/>
    <property type="project" value="UniProtKB-UniRule"/>
</dbReference>
<dbReference type="GO" id="GO:0000050">
    <property type="term" value="P:urea cycle"/>
    <property type="evidence" value="ECO:0007669"/>
    <property type="project" value="TreeGrafter"/>
</dbReference>
<dbReference type="CDD" id="cd01999">
    <property type="entry name" value="ASS"/>
    <property type="match status" value="1"/>
</dbReference>
<dbReference type="FunFam" id="1.20.5.470:FF:000002">
    <property type="entry name" value="Argininosuccinate synthase"/>
    <property type="match status" value="1"/>
</dbReference>
<dbReference type="FunFam" id="3.40.50.620:FF:000038">
    <property type="entry name" value="Argininosuccinate synthase"/>
    <property type="match status" value="1"/>
</dbReference>
<dbReference type="FunFam" id="3.90.1260.10:FF:000007">
    <property type="entry name" value="Argininosuccinate synthase"/>
    <property type="match status" value="1"/>
</dbReference>
<dbReference type="Gene3D" id="3.90.1260.10">
    <property type="entry name" value="Argininosuccinate synthetase, chain A, domain 2"/>
    <property type="match status" value="1"/>
</dbReference>
<dbReference type="Gene3D" id="3.40.50.620">
    <property type="entry name" value="HUPs"/>
    <property type="match status" value="1"/>
</dbReference>
<dbReference type="Gene3D" id="1.20.5.470">
    <property type="entry name" value="Single helix bin"/>
    <property type="match status" value="1"/>
</dbReference>
<dbReference type="HAMAP" id="MF_00005">
    <property type="entry name" value="Arg_succ_synth_type1"/>
    <property type="match status" value="1"/>
</dbReference>
<dbReference type="InterPro" id="IPR048268">
    <property type="entry name" value="Arginosuc_syn_C"/>
</dbReference>
<dbReference type="InterPro" id="IPR048267">
    <property type="entry name" value="Arginosuc_syn_N"/>
</dbReference>
<dbReference type="InterPro" id="IPR001518">
    <property type="entry name" value="Arginosuc_synth"/>
</dbReference>
<dbReference type="InterPro" id="IPR018223">
    <property type="entry name" value="Arginosuc_synth_CS"/>
</dbReference>
<dbReference type="InterPro" id="IPR023434">
    <property type="entry name" value="Arginosuc_synth_type_1_subfam"/>
</dbReference>
<dbReference type="InterPro" id="IPR024074">
    <property type="entry name" value="AS_cat/multimer_dom_body"/>
</dbReference>
<dbReference type="InterPro" id="IPR014729">
    <property type="entry name" value="Rossmann-like_a/b/a_fold"/>
</dbReference>
<dbReference type="NCBIfam" id="TIGR00032">
    <property type="entry name" value="argG"/>
    <property type="match status" value="1"/>
</dbReference>
<dbReference type="NCBIfam" id="NF001770">
    <property type="entry name" value="PRK00509.1"/>
    <property type="match status" value="1"/>
</dbReference>
<dbReference type="PANTHER" id="PTHR11587">
    <property type="entry name" value="ARGININOSUCCINATE SYNTHASE"/>
    <property type="match status" value="1"/>
</dbReference>
<dbReference type="PANTHER" id="PTHR11587:SF2">
    <property type="entry name" value="ARGININOSUCCINATE SYNTHASE"/>
    <property type="match status" value="1"/>
</dbReference>
<dbReference type="Pfam" id="PF20979">
    <property type="entry name" value="Arginosuc_syn_C"/>
    <property type="match status" value="1"/>
</dbReference>
<dbReference type="Pfam" id="PF00764">
    <property type="entry name" value="Arginosuc_synth"/>
    <property type="match status" value="1"/>
</dbReference>
<dbReference type="SUPFAM" id="SSF52402">
    <property type="entry name" value="Adenine nucleotide alpha hydrolases-like"/>
    <property type="match status" value="1"/>
</dbReference>
<dbReference type="SUPFAM" id="SSF69864">
    <property type="entry name" value="Argininosuccinate synthetase, C-terminal domain"/>
    <property type="match status" value="1"/>
</dbReference>
<dbReference type="PROSITE" id="PS00564">
    <property type="entry name" value="ARGININOSUCCIN_SYN_1"/>
    <property type="match status" value="1"/>
</dbReference>
<dbReference type="PROSITE" id="PS00565">
    <property type="entry name" value="ARGININOSUCCIN_SYN_2"/>
    <property type="match status" value="1"/>
</dbReference>
<accession>Q929S9</accession>
<gene>
    <name evidence="1" type="primary">argG</name>
    <name type="ordered locus">lin2195</name>
</gene>
<organism>
    <name type="scientific">Listeria innocua serovar 6a (strain ATCC BAA-680 / CLIP 11262)</name>
    <dbReference type="NCBI Taxonomy" id="272626"/>
    <lineage>
        <taxon>Bacteria</taxon>
        <taxon>Bacillati</taxon>
        <taxon>Bacillota</taxon>
        <taxon>Bacilli</taxon>
        <taxon>Bacillales</taxon>
        <taxon>Listeriaceae</taxon>
        <taxon>Listeria</taxon>
    </lineage>
</organism>
<evidence type="ECO:0000255" key="1">
    <source>
        <dbReference type="HAMAP-Rule" id="MF_00005"/>
    </source>
</evidence>
<reference key="1">
    <citation type="journal article" date="2001" name="Science">
        <title>Comparative genomics of Listeria species.</title>
        <authorList>
            <person name="Glaser P."/>
            <person name="Frangeul L."/>
            <person name="Buchrieser C."/>
            <person name="Rusniok C."/>
            <person name="Amend A."/>
            <person name="Baquero F."/>
            <person name="Berche P."/>
            <person name="Bloecker H."/>
            <person name="Brandt P."/>
            <person name="Chakraborty T."/>
            <person name="Charbit A."/>
            <person name="Chetouani F."/>
            <person name="Couve E."/>
            <person name="de Daruvar A."/>
            <person name="Dehoux P."/>
            <person name="Domann E."/>
            <person name="Dominguez-Bernal G."/>
            <person name="Duchaud E."/>
            <person name="Durant L."/>
            <person name="Dussurget O."/>
            <person name="Entian K.-D."/>
            <person name="Fsihi H."/>
            <person name="Garcia-del Portillo F."/>
            <person name="Garrido P."/>
            <person name="Gautier L."/>
            <person name="Goebel W."/>
            <person name="Gomez-Lopez N."/>
            <person name="Hain T."/>
            <person name="Hauf J."/>
            <person name="Jackson D."/>
            <person name="Jones L.-M."/>
            <person name="Kaerst U."/>
            <person name="Kreft J."/>
            <person name="Kuhn M."/>
            <person name="Kunst F."/>
            <person name="Kurapkat G."/>
            <person name="Madueno E."/>
            <person name="Maitournam A."/>
            <person name="Mata Vicente J."/>
            <person name="Ng E."/>
            <person name="Nedjari H."/>
            <person name="Nordsiek G."/>
            <person name="Novella S."/>
            <person name="de Pablos B."/>
            <person name="Perez-Diaz J.-C."/>
            <person name="Purcell R."/>
            <person name="Remmel B."/>
            <person name="Rose M."/>
            <person name="Schlueter T."/>
            <person name="Simoes N."/>
            <person name="Tierrez A."/>
            <person name="Vazquez-Boland J.-A."/>
            <person name="Voss H."/>
            <person name="Wehland J."/>
            <person name="Cossart P."/>
        </authorList>
    </citation>
    <scope>NUCLEOTIDE SEQUENCE [LARGE SCALE GENOMIC DNA]</scope>
    <source>
        <strain>ATCC BAA-680 / CLIP 11262</strain>
    </source>
</reference>
<name>ASSY_LISIN</name>
<feature type="chain" id="PRO_0000148608" description="Argininosuccinate synthase">
    <location>
        <begin position="1"/>
        <end position="404"/>
    </location>
</feature>
<feature type="binding site" evidence="1">
    <location>
        <begin position="9"/>
        <end position="17"/>
    </location>
    <ligand>
        <name>ATP</name>
        <dbReference type="ChEBI" id="CHEBI:30616"/>
    </ligand>
</feature>
<feature type="binding site" evidence="1">
    <location>
        <position position="86"/>
    </location>
    <ligand>
        <name>L-citrulline</name>
        <dbReference type="ChEBI" id="CHEBI:57743"/>
    </ligand>
</feature>
<feature type="binding site" evidence="1">
    <location>
        <position position="116"/>
    </location>
    <ligand>
        <name>ATP</name>
        <dbReference type="ChEBI" id="CHEBI:30616"/>
    </ligand>
</feature>
<feature type="binding site" evidence="1">
    <location>
        <position position="118"/>
    </location>
    <ligand>
        <name>L-aspartate</name>
        <dbReference type="ChEBI" id="CHEBI:29991"/>
    </ligand>
</feature>
<feature type="binding site" evidence="1">
    <location>
        <position position="122"/>
    </location>
    <ligand>
        <name>L-aspartate</name>
        <dbReference type="ChEBI" id="CHEBI:29991"/>
    </ligand>
</feature>
<feature type="binding site" evidence="1">
    <location>
        <position position="122"/>
    </location>
    <ligand>
        <name>L-citrulline</name>
        <dbReference type="ChEBI" id="CHEBI:57743"/>
    </ligand>
</feature>
<feature type="binding site" evidence="1">
    <location>
        <position position="123"/>
    </location>
    <ligand>
        <name>L-aspartate</name>
        <dbReference type="ChEBI" id="CHEBI:29991"/>
    </ligand>
</feature>
<feature type="binding site" evidence="1">
    <location>
        <position position="126"/>
    </location>
    <ligand>
        <name>L-citrulline</name>
        <dbReference type="ChEBI" id="CHEBI:57743"/>
    </ligand>
</feature>
<feature type="binding site" evidence="1">
    <location>
        <position position="174"/>
    </location>
    <ligand>
        <name>L-citrulline</name>
        <dbReference type="ChEBI" id="CHEBI:57743"/>
    </ligand>
</feature>
<feature type="binding site" evidence="1">
    <location>
        <position position="183"/>
    </location>
    <ligand>
        <name>L-citrulline</name>
        <dbReference type="ChEBI" id="CHEBI:57743"/>
    </ligand>
</feature>
<feature type="binding site" evidence="1">
    <location>
        <position position="259"/>
    </location>
    <ligand>
        <name>L-citrulline</name>
        <dbReference type="ChEBI" id="CHEBI:57743"/>
    </ligand>
</feature>
<feature type="binding site" evidence="1">
    <location>
        <position position="271"/>
    </location>
    <ligand>
        <name>L-citrulline</name>
        <dbReference type="ChEBI" id="CHEBI:57743"/>
    </ligand>
</feature>
<proteinExistence type="inferred from homology"/>
<protein>
    <recommendedName>
        <fullName evidence="1">Argininosuccinate synthase</fullName>
        <ecNumber evidence="1">6.3.4.5</ecNumber>
    </recommendedName>
    <alternativeName>
        <fullName evidence="1">Citrulline--aspartate ligase</fullName>
    </alternativeName>
</protein>
<sequence length="404" mass="44398">MTKEKIVLAYSGGLDTSVAIQWLVESGYEVIACCLDVGEGKNLDFIKEKAITVGASASYTIDAKEEFAENFALIALQAHAYYEGKYPLISALSRPLIAKKLVEVARQEGASAIAHGCTGKGNDQVRFEVAIHALAPDLKVVSPVRDWKWSREEEINYAKEHNIPVPIDLDNPFSIDQNLWGRSNECGVLENPWTTPPEAAYDLTVSLEDAPDTADIVEITFDAGIPISLNGENMSLANLILTLNEIAGKHGVGRIDHIENRLVGIKSREVYECPAAVTLITAHKELEDLTFVREVAHFKPIIEQKISETIYNGLWFSPLTEALIAFLKSTQKFVNGTIRVKLFKGHAIVEGRKSPNSLYDENLATYTSSDTFDQDAAVGFIKLFGLPTKVSAEVNSKVTITTEV</sequence>
<keyword id="KW-0028">Amino-acid biosynthesis</keyword>
<keyword id="KW-0055">Arginine biosynthesis</keyword>
<keyword id="KW-0067">ATP-binding</keyword>
<keyword id="KW-0963">Cytoplasm</keyword>
<keyword id="KW-0436">Ligase</keyword>
<keyword id="KW-0547">Nucleotide-binding</keyword>
<comment type="catalytic activity">
    <reaction evidence="1">
        <text>L-citrulline + L-aspartate + ATP = 2-(N(omega)-L-arginino)succinate + AMP + diphosphate + H(+)</text>
        <dbReference type="Rhea" id="RHEA:10932"/>
        <dbReference type="ChEBI" id="CHEBI:15378"/>
        <dbReference type="ChEBI" id="CHEBI:29991"/>
        <dbReference type="ChEBI" id="CHEBI:30616"/>
        <dbReference type="ChEBI" id="CHEBI:33019"/>
        <dbReference type="ChEBI" id="CHEBI:57472"/>
        <dbReference type="ChEBI" id="CHEBI:57743"/>
        <dbReference type="ChEBI" id="CHEBI:456215"/>
        <dbReference type="EC" id="6.3.4.5"/>
    </reaction>
</comment>
<comment type="pathway">
    <text evidence="1">Amino-acid biosynthesis; L-arginine biosynthesis; L-arginine from L-ornithine and carbamoyl phosphate: step 2/3.</text>
</comment>
<comment type="subunit">
    <text evidence="1">Homotetramer.</text>
</comment>
<comment type="subcellular location">
    <subcellularLocation>
        <location evidence="1">Cytoplasm</location>
    </subcellularLocation>
</comment>
<comment type="similarity">
    <text evidence="1">Belongs to the argininosuccinate synthase family. Type 1 subfamily.</text>
</comment>